<dbReference type="EC" id="3.1.1.96" evidence="1"/>
<dbReference type="EMBL" id="AE004439">
    <property type="protein sequence ID" value="AAK03699.1"/>
    <property type="molecule type" value="Genomic_DNA"/>
</dbReference>
<dbReference type="RefSeq" id="WP_005724478.1">
    <property type="nucleotide sequence ID" value="NC_002663.1"/>
</dbReference>
<dbReference type="SMR" id="Q9CKK0"/>
<dbReference type="STRING" id="272843.PM1615"/>
<dbReference type="EnsemblBacteria" id="AAK03699">
    <property type="protein sequence ID" value="AAK03699"/>
    <property type="gene ID" value="PM1615"/>
</dbReference>
<dbReference type="KEGG" id="pmu:PM1615"/>
<dbReference type="HOGENOM" id="CLU_076901_1_1_6"/>
<dbReference type="OrthoDB" id="9801395at2"/>
<dbReference type="Proteomes" id="UP000000809">
    <property type="component" value="Chromosome"/>
</dbReference>
<dbReference type="GO" id="GO:0005737">
    <property type="term" value="C:cytoplasm"/>
    <property type="evidence" value="ECO:0007669"/>
    <property type="project" value="UniProtKB-SubCell"/>
</dbReference>
<dbReference type="GO" id="GO:0051500">
    <property type="term" value="F:D-tyrosyl-tRNA(Tyr) deacylase activity"/>
    <property type="evidence" value="ECO:0007669"/>
    <property type="project" value="TreeGrafter"/>
</dbReference>
<dbReference type="GO" id="GO:0106026">
    <property type="term" value="F:Gly-tRNA(Ala) deacylase activity"/>
    <property type="evidence" value="ECO:0007669"/>
    <property type="project" value="UniProtKB-UniRule"/>
</dbReference>
<dbReference type="GO" id="GO:0043908">
    <property type="term" value="F:Ser(Gly)-tRNA(Ala) hydrolase activity"/>
    <property type="evidence" value="ECO:0007669"/>
    <property type="project" value="UniProtKB-UniRule"/>
</dbReference>
<dbReference type="GO" id="GO:0000049">
    <property type="term" value="F:tRNA binding"/>
    <property type="evidence" value="ECO:0007669"/>
    <property type="project" value="UniProtKB-UniRule"/>
</dbReference>
<dbReference type="GO" id="GO:0019478">
    <property type="term" value="P:D-amino acid catabolic process"/>
    <property type="evidence" value="ECO:0007669"/>
    <property type="project" value="UniProtKB-UniRule"/>
</dbReference>
<dbReference type="CDD" id="cd00563">
    <property type="entry name" value="Dtyr_deacylase"/>
    <property type="match status" value="1"/>
</dbReference>
<dbReference type="FunFam" id="3.50.80.10:FF:000001">
    <property type="entry name" value="D-aminoacyl-tRNA deacylase"/>
    <property type="match status" value="1"/>
</dbReference>
<dbReference type="Gene3D" id="3.50.80.10">
    <property type="entry name" value="D-tyrosyl-tRNA(Tyr) deacylase"/>
    <property type="match status" value="1"/>
</dbReference>
<dbReference type="HAMAP" id="MF_00518">
    <property type="entry name" value="Deacylase_Dtd"/>
    <property type="match status" value="1"/>
</dbReference>
<dbReference type="InterPro" id="IPR003732">
    <property type="entry name" value="Daa-tRNA_deacyls_DTD"/>
</dbReference>
<dbReference type="InterPro" id="IPR023509">
    <property type="entry name" value="DTD-like_sf"/>
</dbReference>
<dbReference type="NCBIfam" id="TIGR00256">
    <property type="entry name" value="D-aminoacyl-tRNA deacylase"/>
    <property type="match status" value="1"/>
</dbReference>
<dbReference type="PANTHER" id="PTHR10472:SF5">
    <property type="entry name" value="D-AMINOACYL-TRNA DEACYLASE 1"/>
    <property type="match status" value="1"/>
</dbReference>
<dbReference type="PANTHER" id="PTHR10472">
    <property type="entry name" value="D-TYROSYL-TRNA TYR DEACYLASE"/>
    <property type="match status" value="1"/>
</dbReference>
<dbReference type="Pfam" id="PF02580">
    <property type="entry name" value="Tyr_Deacylase"/>
    <property type="match status" value="1"/>
</dbReference>
<dbReference type="SUPFAM" id="SSF69500">
    <property type="entry name" value="DTD-like"/>
    <property type="match status" value="1"/>
</dbReference>
<name>DTD_PASMU</name>
<evidence type="ECO:0000255" key="1">
    <source>
        <dbReference type="HAMAP-Rule" id="MF_00518"/>
    </source>
</evidence>
<protein>
    <recommendedName>
        <fullName evidence="1">D-aminoacyl-tRNA deacylase</fullName>
        <shortName evidence="1">DTD</shortName>
        <ecNumber evidence="1">3.1.1.96</ecNumber>
    </recommendedName>
    <alternativeName>
        <fullName evidence="1">Gly-tRNA(Ala) deacylase</fullName>
    </alternativeName>
</protein>
<proteinExistence type="inferred from homology"/>
<reference key="1">
    <citation type="journal article" date="2001" name="Proc. Natl. Acad. Sci. U.S.A.">
        <title>Complete genomic sequence of Pasteurella multocida Pm70.</title>
        <authorList>
            <person name="May B.J."/>
            <person name="Zhang Q."/>
            <person name="Li L.L."/>
            <person name="Paustian M.L."/>
            <person name="Whittam T.S."/>
            <person name="Kapur V."/>
        </authorList>
    </citation>
    <scope>NUCLEOTIDE SEQUENCE [LARGE SCALE GENOMIC DNA]</scope>
    <source>
        <strain>Pm70</strain>
    </source>
</reference>
<comment type="function">
    <text evidence="1">An aminoacyl-tRNA editing enzyme that deacylates mischarged D-aminoacyl-tRNAs. Also deacylates mischarged glycyl-tRNA(Ala), protecting cells against glycine mischarging by AlaRS. Acts via tRNA-based rather than protein-based catalysis; rejects L-amino acids rather than detecting D-amino acids in the active site. By recycling D-aminoacyl-tRNA to D-amino acids and free tRNA molecules, this enzyme counteracts the toxicity associated with the formation of D-aminoacyl-tRNA entities in vivo and helps enforce protein L-homochirality.</text>
</comment>
<comment type="catalytic activity">
    <reaction evidence="1">
        <text>glycyl-tRNA(Ala) + H2O = tRNA(Ala) + glycine + H(+)</text>
        <dbReference type="Rhea" id="RHEA:53744"/>
        <dbReference type="Rhea" id="RHEA-COMP:9657"/>
        <dbReference type="Rhea" id="RHEA-COMP:13640"/>
        <dbReference type="ChEBI" id="CHEBI:15377"/>
        <dbReference type="ChEBI" id="CHEBI:15378"/>
        <dbReference type="ChEBI" id="CHEBI:57305"/>
        <dbReference type="ChEBI" id="CHEBI:78442"/>
        <dbReference type="ChEBI" id="CHEBI:78522"/>
        <dbReference type="EC" id="3.1.1.96"/>
    </reaction>
</comment>
<comment type="catalytic activity">
    <reaction evidence="1">
        <text>a D-aminoacyl-tRNA + H2O = a tRNA + a D-alpha-amino acid + H(+)</text>
        <dbReference type="Rhea" id="RHEA:13953"/>
        <dbReference type="Rhea" id="RHEA-COMP:10123"/>
        <dbReference type="Rhea" id="RHEA-COMP:10124"/>
        <dbReference type="ChEBI" id="CHEBI:15377"/>
        <dbReference type="ChEBI" id="CHEBI:15378"/>
        <dbReference type="ChEBI" id="CHEBI:59871"/>
        <dbReference type="ChEBI" id="CHEBI:78442"/>
        <dbReference type="ChEBI" id="CHEBI:79333"/>
        <dbReference type="EC" id="3.1.1.96"/>
    </reaction>
</comment>
<comment type="subunit">
    <text evidence="1">Homodimer.</text>
</comment>
<comment type="subcellular location">
    <subcellularLocation>
        <location evidence="1">Cytoplasm</location>
    </subcellularLocation>
</comment>
<comment type="domain">
    <text evidence="1">A Gly-cisPro motif from one monomer fits into the active site of the other monomer to allow specific chiral rejection of L-amino acids.</text>
</comment>
<comment type="similarity">
    <text evidence="1">Belongs to the DTD family.</text>
</comment>
<accession>Q9CKK0</accession>
<sequence length="144" mass="15840">MIALIQRVSQAKVDVDKQTVGEIGHGLLVLLGVQKDDDHVKADRLIEKVLNYRVFSDAEGKMNLNVQQVKGQVLVVSQFTLAADTQKGLRPSFSRGASPDMAEALYDYVVKKCGEKIPTFSGQFAADMQVSLTNDGPVTFWLEI</sequence>
<organism>
    <name type="scientific">Pasteurella multocida (strain Pm70)</name>
    <dbReference type="NCBI Taxonomy" id="272843"/>
    <lineage>
        <taxon>Bacteria</taxon>
        <taxon>Pseudomonadati</taxon>
        <taxon>Pseudomonadota</taxon>
        <taxon>Gammaproteobacteria</taxon>
        <taxon>Pasteurellales</taxon>
        <taxon>Pasteurellaceae</taxon>
        <taxon>Pasteurella</taxon>
    </lineage>
</organism>
<gene>
    <name evidence="1" type="primary">dtd</name>
    <name type="ordered locus">PM1615</name>
</gene>
<keyword id="KW-0963">Cytoplasm</keyword>
<keyword id="KW-0378">Hydrolase</keyword>
<keyword id="KW-1185">Reference proteome</keyword>
<keyword id="KW-0694">RNA-binding</keyword>
<keyword id="KW-0820">tRNA-binding</keyword>
<feature type="chain" id="PRO_0000164569" description="D-aminoacyl-tRNA deacylase">
    <location>
        <begin position="1"/>
        <end position="144"/>
    </location>
</feature>
<feature type="short sequence motif" description="Gly-cisPro motif, important for rejection of L-amino acids" evidence="1">
    <location>
        <begin position="136"/>
        <end position="137"/>
    </location>
</feature>